<protein>
    <recommendedName>
        <fullName>Protein Shroom2</fullName>
    </recommendedName>
    <alternativeName>
        <fullName>Liver regeneration-related protein LRRG167</fullName>
    </alternativeName>
    <alternativeName>
        <fullName>Protein Apxl</fullName>
    </alternativeName>
</protein>
<sequence length="1423" mass="157989">MRPSTVTSRIWWSESSSSSSHDLSGSWEHTSLQRTSDHFSSMGSIDSLDHSSQLYPSGHLSSAKSNSSIDHLGGHSKRDSAYGSFSTCSSTPDHTLPKADASSTENILYKVGLWEASRPGSSRQSQSTGDPQGLQDRPSSFLPRVPGNSSKSPRPEDNIEPKIATSGRSNFGPVWYVPDKKKAPSPPPLGLPLRSDSFAVAARGHEKARGPPFSDLASMQHFTTLPHVQPRGDRRMETTDRQWKLAHPSSGKEIGNVGYQPEGHLDCRWLCSDDRAGRPSGAPGRHQFSLSSTDVHFLKSYHGSQHPQPCSDESPRFPSSPRELLRITPSGCLQEPPELSQDDNPAQVRWPGSVNQKLDDRGRSHYFSVPHRQPVHGSAHVLIPRSDYWHSDTTPVDLECPLLRPDQRGYPQQYEETPASHERGGYQQLNAGIEGCCSGIHEPPRASHTVRAGLQCPGNDFKLVDAESGRISRQRTPMLHSLTQDGAWRPGNSKDCGNEKPPLLDAQVGKPTRRSDRFATTLRNEIQMRRAKLQKSKSTVTLAGDSEAEDCAGDWRVDVGAVPEGSFPSTYKEHLKEAQTRVLKATSFQRRDLDPTPADQYPGPPEHRTCDHSASSSLSSFPGEPDSAPRLCEAGLAKPPSSAGGVPHILRIGGRKRFTAEQKLKSYSEPEKINEVGLSGDHSPHPTIRTSEDSVGTFADRWKFFEETSKSLLQKPGHRQAFCGIPREKAERPQTQGHECESTEPWFQKRSRATSCGEILSEDRKVEKASEKLNPPRRLGTFAEYQASWKEQKKSLEARSSGRYHSADDILDAGLDQQQRPQYIHERSRSSPSTDHYSQEVPVEPNRQAEDSGGQKEALLCTLQAEEGCSAPSSSVLSSAQPQDSQHVNEDPTSPQPEAQLSSKCQHLQTSTMETSRSPSPQFAPQKLTDKPPLLIHEDNSARYCPVTACYVFIPCRLQVFVAGALPQLQTLGIERVMDNNTTVKMVPIKIVHSESQPEKESRQSLACPAELPALPSGLEKDQIKTLSTSEQCYSRFCVYTRQEVETPHRARPPEPQPPSTPAPPVRDSCSSPPSLNYGKAKEKTVDDLKSEELAREIVGKDKSLADILDPSVKIKTTMDLMEGIFPKDEYLLEEAQQRRKLLPKVPSPRVTEDNSCPSLSAICYNLGTRSKSVPVSQLIKIKILASSPRKQDPGMPGVVSLATNSTYYSTSAPKAELLIKMKDLQEPEEYSAGDLDHDLSIKKQELIDSISRKLQVLREARESLLEDIQANNALGDEVEAIVKDVCKPNEFDKFRMFIGDLDKVVNLLLSLSGRLARVENALNNLDDSPSPGDRQSLLEKQRVLTQQHEDAKELKENLDRRERIVFDILATYLSEENLADYEHFVKMKSALIIEQRELEDKIHLGEEQLKCLFDSLQPERSK</sequence>
<gene>
    <name type="primary">Shroom2</name>
    <name type="synonym">Apxl</name>
    <name type="ORF">Ab2-404</name>
</gene>
<reference key="1">
    <citation type="submission" date="2003-06" db="EMBL/GenBank/DDBJ databases">
        <title>Liver regeneration after PH.</title>
        <authorList>
            <person name="Xu C.S."/>
            <person name="Li W.Q."/>
            <person name="Li Y.C."/>
            <person name="Yuan J.Y."/>
            <person name="Yang K.J."/>
            <person name="Yan H.M."/>
            <person name="Chang C.F."/>
            <person name="Zhao L.F."/>
            <person name="Ma H."/>
            <person name="Wang L."/>
            <person name="Wang S.F."/>
            <person name="Shi J.B."/>
            <person name="Rahman S."/>
            <person name="Wang Q.N."/>
            <person name="Zhang J.B."/>
            <person name="Han H.P."/>
            <person name="Wang G.P."/>
            <person name="Chai L.Q."/>
        </authorList>
    </citation>
    <scope>NUCLEOTIDE SEQUENCE [LARGE SCALE MRNA]</scope>
    <source>
        <tissue>Liver</tissue>
    </source>
</reference>
<reference key="2">
    <citation type="journal article" date="2012" name="Nat. Commun.">
        <title>Quantitative maps of protein phosphorylation sites across 14 different rat organs and tissues.</title>
        <authorList>
            <person name="Lundby A."/>
            <person name="Secher A."/>
            <person name="Lage K."/>
            <person name="Nordsborg N.B."/>
            <person name="Dmytriyev A."/>
            <person name="Lundby C."/>
            <person name="Olsen J.V."/>
        </authorList>
    </citation>
    <scope>PHOSPHORYLATION [LARGE SCALE ANALYSIS] AT SER-103; SER-185; SER-831; SER-918; SER-920 AND SER-1329</scope>
    <scope>IDENTIFICATION BY MASS SPECTROMETRY [LARGE SCALE ANALYSIS]</scope>
</reference>
<comment type="function">
    <text evidence="1">May be involved in endothelial cell morphology changes during cell spreading. In the retinal pigment epithelium, may regulate the biogenesis of melanosomes and promote their association with the apical cell surface by inducing gamma-tubulin redistribution (By similarity).</text>
</comment>
<comment type="subunit">
    <text evidence="1">Interacts with F-actin.</text>
</comment>
<comment type="subcellular location">
    <subcellularLocation>
        <location evidence="1">Apical cell membrane</location>
    </subcellularLocation>
    <subcellularLocation>
        <location evidence="1">Cell junction</location>
        <location evidence="1">Tight junction</location>
    </subcellularLocation>
    <subcellularLocation>
        <location evidence="1">Cytoplasm</location>
        <location evidence="1">Cytoskeleton</location>
    </subcellularLocation>
    <text evidence="1">Associates with cortical F-actin.</text>
</comment>
<comment type="domain">
    <text evidence="1">The ASD1 domain mediates F-actin binding.</text>
</comment>
<comment type="similarity">
    <text evidence="7">Belongs to the shroom family.</text>
</comment>
<dbReference type="EMBL" id="AY325213">
    <property type="protein sequence ID" value="AAP92614.1"/>
    <property type="molecule type" value="mRNA"/>
</dbReference>
<dbReference type="SMR" id="Q7TP36"/>
<dbReference type="FunCoup" id="Q7TP36">
    <property type="interactions" value="1007"/>
</dbReference>
<dbReference type="STRING" id="10116.ENSRNOP00000056187"/>
<dbReference type="GlyGen" id="Q7TP36">
    <property type="glycosylation" value="2 sites"/>
</dbReference>
<dbReference type="iPTMnet" id="Q7TP36"/>
<dbReference type="PhosphoSitePlus" id="Q7TP36"/>
<dbReference type="SwissPalm" id="Q7TP36"/>
<dbReference type="jPOST" id="Q7TP36"/>
<dbReference type="PaxDb" id="10116-ENSRNOP00000056187"/>
<dbReference type="Ensembl" id="ENSRNOT00000050819.2">
    <property type="protein sequence ID" value="ENSRNOP00000042259.1"/>
    <property type="gene ID" value="ENSRNOG00000024322.7"/>
</dbReference>
<dbReference type="AGR" id="RGD:1565163"/>
<dbReference type="RGD" id="1565163">
    <property type="gene designation" value="Shroom2"/>
</dbReference>
<dbReference type="eggNOG" id="ENOG502QUU2">
    <property type="taxonomic scope" value="Eukaryota"/>
</dbReference>
<dbReference type="GeneTree" id="ENSGT00940000155212"/>
<dbReference type="InParanoid" id="Q7TP36"/>
<dbReference type="PRO" id="PR:Q7TP36"/>
<dbReference type="Proteomes" id="UP000002494">
    <property type="component" value="Chromosome X"/>
</dbReference>
<dbReference type="Bgee" id="ENSRNOG00000024322">
    <property type="expression patterns" value="Expressed in Ammon's horn and 18 other cell types or tissues"/>
</dbReference>
<dbReference type="ExpressionAtlas" id="Q7TP36">
    <property type="expression patterns" value="baseline and differential"/>
</dbReference>
<dbReference type="GO" id="GO:0005912">
    <property type="term" value="C:adherens junction"/>
    <property type="evidence" value="ECO:0000266"/>
    <property type="project" value="RGD"/>
</dbReference>
<dbReference type="GO" id="GO:0043296">
    <property type="term" value="C:apical junction complex"/>
    <property type="evidence" value="ECO:0000266"/>
    <property type="project" value="RGD"/>
</dbReference>
<dbReference type="GO" id="GO:0016324">
    <property type="term" value="C:apical plasma membrane"/>
    <property type="evidence" value="ECO:0000266"/>
    <property type="project" value="RGD"/>
</dbReference>
<dbReference type="GO" id="GO:0005923">
    <property type="term" value="C:bicellular tight junction"/>
    <property type="evidence" value="ECO:0000250"/>
    <property type="project" value="UniProtKB"/>
</dbReference>
<dbReference type="GO" id="GO:0005938">
    <property type="term" value="C:cell cortex"/>
    <property type="evidence" value="ECO:0000266"/>
    <property type="project" value="RGD"/>
</dbReference>
<dbReference type="GO" id="GO:0005911">
    <property type="term" value="C:cell-cell junction"/>
    <property type="evidence" value="ECO:0000266"/>
    <property type="project" value="RGD"/>
</dbReference>
<dbReference type="GO" id="GO:0030864">
    <property type="term" value="C:cortical actin cytoskeleton"/>
    <property type="evidence" value="ECO:0000266"/>
    <property type="project" value="RGD"/>
</dbReference>
<dbReference type="GO" id="GO:0005737">
    <property type="term" value="C:cytoplasm"/>
    <property type="evidence" value="ECO:0000266"/>
    <property type="project" value="RGD"/>
</dbReference>
<dbReference type="GO" id="GO:0005856">
    <property type="term" value="C:cytoskeleton"/>
    <property type="evidence" value="ECO:0000250"/>
    <property type="project" value="UniProtKB"/>
</dbReference>
<dbReference type="GO" id="GO:0005874">
    <property type="term" value="C:microtubule"/>
    <property type="evidence" value="ECO:0007669"/>
    <property type="project" value="UniProtKB-KW"/>
</dbReference>
<dbReference type="GO" id="GO:0043025">
    <property type="term" value="C:neuronal cell body"/>
    <property type="evidence" value="ECO:0000266"/>
    <property type="project" value="RGD"/>
</dbReference>
<dbReference type="GO" id="GO:0005886">
    <property type="term" value="C:plasma membrane"/>
    <property type="evidence" value="ECO:0000250"/>
    <property type="project" value="UniProtKB"/>
</dbReference>
<dbReference type="GO" id="GO:0003779">
    <property type="term" value="F:actin binding"/>
    <property type="evidence" value="ECO:0000250"/>
    <property type="project" value="UniProtKB"/>
</dbReference>
<dbReference type="GO" id="GO:0051015">
    <property type="term" value="F:actin filament binding"/>
    <property type="evidence" value="ECO:0000266"/>
    <property type="project" value="RGD"/>
</dbReference>
<dbReference type="GO" id="GO:0008013">
    <property type="term" value="F:beta-catenin binding"/>
    <property type="evidence" value="ECO:0000266"/>
    <property type="project" value="RGD"/>
</dbReference>
<dbReference type="GO" id="GO:0019904">
    <property type="term" value="F:protein domain specific binding"/>
    <property type="evidence" value="ECO:0000266"/>
    <property type="project" value="RGD"/>
</dbReference>
<dbReference type="GO" id="GO:0007015">
    <property type="term" value="P:actin filament organization"/>
    <property type="evidence" value="ECO:0000318"/>
    <property type="project" value="GO_Central"/>
</dbReference>
<dbReference type="GO" id="GO:0016477">
    <property type="term" value="P:cell migration"/>
    <property type="evidence" value="ECO:0000250"/>
    <property type="project" value="UniProtKB"/>
</dbReference>
<dbReference type="GO" id="GO:0045217">
    <property type="term" value="P:cell-cell junction maintenance"/>
    <property type="evidence" value="ECO:0000266"/>
    <property type="project" value="RGD"/>
</dbReference>
<dbReference type="GO" id="GO:0032438">
    <property type="term" value="P:melanosome organization"/>
    <property type="evidence" value="ECO:0000250"/>
    <property type="project" value="UniProtKB"/>
</dbReference>
<dbReference type="GO" id="GO:0030835">
    <property type="term" value="P:negative regulation of actin filament depolymerization"/>
    <property type="evidence" value="ECO:0000266"/>
    <property type="project" value="RGD"/>
</dbReference>
<dbReference type="Gene3D" id="6.10.250.3120">
    <property type="match status" value="1"/>
</dbReference>
<dbReference type="InterPro" id="IPR014800">
    <property type="entry name" value="ASD1_dom"/>
</dbReference>
<dbReference type="InterPro" id="IPR014799">
    <property type="entry name" value="ASD2_dom"/>
</dbReference>
<dbReference type="InterPro" id="IPR027685">
    <property type="entry name" value="Shroom_fam"/>
</dbReference>
<dbReference type="PANTHER" id="PTHR15012">
    <property type="entry name" value="APICAL PROTEIN/SHROOM-RELATED"/>
    <property type="match status" value="1"/>
</dbReference>
<dbReference type="PANTHER" id="PTHR15012:SF8">
    <property type="entry name" value="PROTEIN SHROOM2"/>
    <property type="match status" value="1"/>
</dbReference>
<dbReference type="Pfam" id="PF08688">
    <property type="entry name" value="ASD1"/>
    <property type="match status" value="1"/>
</dbReference>
<dbReference type="Pfam" id="PF08687">
    <property type="entry name" value="ASD2"/>
    <property type="match status" value="1"/>
</dbReference>
<dbReference type="PROSITE" id="PS51306">
    <property type="entry name" value="ASD1"/>
    <property type="match status" value="1"/>
</dbReference>
<dbReference type="PROSITE" id="PS51307">
    <property type="entry name" value="ASD2"/>
    <property type="match status" value="1"/>
</dbReference>
<accession>Q7TP36</accession>
<organism>
    <name type="scientific">Rattus norvegicus</name>
    <name type="common">Rat</name>
    <dbReference type="NCBI Taxonomy" id="10116"/>
    <lineage>
        <taxon>Eukaryota</taxon>
        <taxon>Metazoa</taxon>
        <taxon>Chordata</taxon>
        <taxon>Craniata</taxon>
        <taxon>Vertebrata</taxon>
        <taxon>Euteleostomi</taxon>
        <taxon>Mammalia</taxon>
        <taxon>Eutheria</taxon>
        <taxon>Euarchontoglires</taxon>
        <taxon>Glires</taxon>
        <taxon>Rodentia</taxon>
        <taxon>Myomorpha</taxon>
        <taxon>Muroidea</taxon>
        <taxon>Muridae</taxon>
        <taxon>Murinae</taxon>
        <taxon>Rattus</taxon>
    </lineage>
</organism>
<feature type="chain" id="PRO_0000286064" description="Protein Shroom2">
    <location>
        <begin position="1"/>
        <end position="1423"/>
    </location>
</feature>
<feature type="domain" description="ASD1" evidence="4">
    <location>
        <begin position="575"/>
        <end position="677"/>
    </location>
</feature>
<feature type="domain" description="ASD2" evidence="5">
    <location>
        <begin position="1092"/>
        <end position="1418"/>
    </location>
</feature>
<feature type="region of interest" description="Disordered" evidence="6">
    <location>
        <begin position="1"/>
        <end position="101"/>
    </location>
</feature>
<feature type="region of interest" description="Disordered" evidence="6">
    <location>
        <begin position="116"/>
        <end position="171"/>
    </location>
</feature>
<feature type="region of interest" description="Disordered" evidence="6">
    <location>
        <begin position="300"/>
        <end position="357"/>
    </location>
</feature>
<feature type="region of interest" description="Disordered" evidence="6">
    <location>
        <begin position="586"/>
        <end position="630"/>
    </location>
</feature>
<feature type="region of interest" description="Disordered" evidence="6">
    <location>
        <begin position="758"/>
        <end position="855"/>
    </location>
</feature>
<feature type="region of interest" description="Disordered" evidence="6">
    <location>
        <begin position="872"/>
        <end position="930"/>
    </location>
</feature>
<feature type="region of interest" description="Disordered" evidence="6">
    <location>
        <begin position="1045"/>
        <end position="1085"/>
    </location>
</feature>
<feature type="compositionally biased region" description="Low complexity" evidence="6">
    <location>
        <begin position="8"/>
        <end position="27"/>
    </location>
</feature>
<feature type="compositionally biased region" description="Polar residues" evidence="6">
    <location>
        <begin position="28"/>
        <end position="69"/>
    </location>
</feature>
<feature type="compositionally biased region" description="Polar residues" evidence="6">
    <location>
        <begin position="83"/>
        <end position="93"/>
    </location>
</feature>
<feature type="compositionally biased region" description="Polar residues" evidence="6">
    <location>
        <begin position="119"/>
        <end position="130"/>
    </location>
</feature>
<feature type="compositionally biased region" description="Basic and acidic residues" evidence="6">
    <location>
        <begin position="761"/>
        <end position="771"/>
    </location>
</feature>
<feature type="compositionally biased region" description="Low complexity" evidence="6">
    <location>
        <begin position="872"/>
        <end position="885"/>
    </location>
</feature>
<feature type="compositionally biased region" description="Polar residues" evidence="6">
    <location>
        <begin position="891"/>
        <end position="923"/>
    </location>
</feature>
<feature type="compositionally biased region" description="Pro residues" evidence="6">
    <location>
        <begin position="1054"/>
        <end position="1065"/>
    </location>
</feature>
<feature type="modified residue" description="Phosphoserine" evidence="8">
    <location>
        <position position="103"/>
    </location>
</feature>
<feature type="modified residue" description="Phosphoserine" evidence="8">
    <location>
        <position position="185"/>
    </location>
</feature>
<feature type="modified residue" description="Phosphoserine" evidence="2">
    <location>
        <position position="197"/>
    </location>
</feature>
<feature type="modified residue" description="Phosphoserine" evidence="3">
    <location>
        <position position="291"/>
    </location>
</feature>
<feature type="modified residue" description="Phosphoserine" evidence="2">
    <location>
        <position position="806"/>
    </location>
</feature>
<feature type="modified residue" description="Phosphoserine" evidence="2">
    <location>
        <position position="830"/>
    </location>
</feature>
<feature type="modified residue" description="Phosphoserine" evidence="8">
    <location>
        <position position="831"/>
    </location>
</feature>
<feature type="modified residue" description="Phosphoserine" evidence="2">
    <location>
        <position position="833"/>
    </location>
</feature>
<feature type="modified residue" description="Phosphothreonine" evidence="2">
    <location>
        <position position="834"/>
    </location>
</feature>
<feature type="modified residue" description="Phosphoserine" evidence="8">
    <location>
        <position position="918"/>
    </location>
</feature>
<feature type="modified residue" description="Phosphoserine" evidence="8">
    <location>
        <position position="920"/>
    </location>
</feature>
<feature type="modified residue" description="Phosphoserine" evidence="2">
    <location>
        <position position="1072"/>
    </location>
</feature>
<feature type="modified residue" description="Phosphoserine" evidence="8">
    <location>
        <position position="1329"/>
    </location>
</feature>
<evidence type="ECO:0000250" key="1"/>
<evidence type="ECO:0000250" key="2">
    <source>
        <dbReference type="UniProtKB" id="A2ALU4"/>
    </source>
</evidence>
<evidence type="ECO:0000250" key="3">
    <source>
        <dbReference type="UniProtKB" id="Q13796"/>
    </source>
</evidence>
<evidence type="ECO:0000255" key="4">
    <source>
        <dbReference type="PROSITE-ProRule" id="PRU00637"/>
    </source>
</evidence>
<evidence type="ECO:0000255" key="5">
    <source>
        <dbReference type="PROSITE-ProRule" id="PRU00638"/>
    </source>
</evidence>
<evidence type="ECO:0000256" key="6">
    <source>
        <dbReference type="SAM" id="MobiDB-lite"/>
    </source>
</evidence>
<evidence type="ECO:0000305" key="7"/>
<evidence type="ECO:0007744" key="8">
    <source>
    </source>
</evidence>
<keyword id="KW-0009">Actin-binding</keyword>
<keyword id="KW-0965">Cell junction</keyword>
<keyword id="KW-1003">Cell membrane</keyword>
<keyword id="KW-0963">Cytoplasm</keyword>
<keyword id="KW-0206">Cytoskeleton</keyword>
<keyword id="KW-0217">Developmental protein</keyword>
<keyword id="KW-0472">Membrane</keyword>
<keyword id="KW-0493">Microtubule</keyword>
<keyword id="KW-0597">Phosphoprotein</keyword>
<keyword id="KW-1185">Reference proteome</keyword>
<keyword id="KW-0796">Tight junction</keyword>
<proteinExistence type="evidence at protein level"/>
<name>SHRM2_RAT</name>